<accession>Q9VWR8</accession>
<accession>Q7KUV6</accession>
<accession>Q9VWR9</accession>
<name>DPY19_DROME</name>
<organism>
    <name type="scientific">Drosophila melanogaster</name>
    <name type="common">Fruit fly</name>
    <dbReference type="NCBI Taxonomy" id="7227"/>
    <lineage>
        <taxon>Eukaryota</taxon>
        <taxon>Metazoa</taxon>
        <taxon>Ecdysozoa</taxon>
        <taxon>Arthropoda</taxon>
        <taxon>Hexapoda</taxon>
        <taxon>Insecta</taxon>
        <taxon>Pterygota</taxon>
        <taxon>Neoptera</taxon>
        <taxon>Endopterygota</taxon>
        <taxon>Diptera</taxon>
        <taxon>Brachycera</taxon>
        <taxon>Muscomorpha</taxon>
        <taxon>Ephydroidea</taxon>
        <taxon>Drosophilidae</taxon>
        <taxon>Drosophila</taxon>
        <taxon>Sophophora</taxon>
    </lineage>
</organism>
<sequence length="872" mass="101097">MREPNLYVILSHALIGCGFFFLYVQHVRVIFETRTNIQQLNQLEREALLRREDALYYAFYKQLAEGPDFWHGYEQLKNVTDIEYPHSVNVLQRFYVLPELVTAYFFHVVRSGFNPMVQPMQFYLEFVWLMGGVTLLVLYLYGTLLSENIFGGIYGVISYLMFHSFVAKIYERPLARENFAFPFIFLQMFYLCICIGRIIHRQRHTSRMFMIFAMSLFTACALLSWQFSTFIFTTQILIMMTSWNASALPTALVNAFVLDYSLSHLLGHALAFVMSHGNSQLLLTWQLSISLFLFLITMVRQLRHVRSRRLGHAQDLLNGDLFSLKFLMLTLLLASSVQTTLIELFNRAGVVSVTEGDQQHFFDICAHWALQVNVGFVAHLSACNPQYARVAWSELWQLVKTMIVKPYCMYGVVMLAMFFRRWRKSGAPVSALTEEQRERARKYVLEDFIEEHFVSMSDMSSKETEKQLYKCFRLLKSCDYDYERYKRAQASLRKEQPPARDDFMQDIKRLRAQINRNSVKQRKERAQETKEAATDGASTPTEEEDKDPEAESESKKKNQEPGSGETETESAADPTETPPSRSADNEEEEEEHSATAAGCGSNSSGHRQRKRSSSRRSSVVPTANAQILNMHYVYSFLQMLVFTLIGLAVRKLFFLSFTQGCVIAPTVCSKLWYHRQRNIFWSVSLAVFLLSMFDPGMVNIREEYFPTRYSKSGDDLDSMLEWIKLNTERDAVFAGPVDIIGTVHLTTKRPIVNHAHLEMRQIAERTEHVYSVYSRQQSSDIYNQCAQLKIQYLIISLDECTNEVRDDCDLLAIWDDKQPAYQKYPQFCHELLHKNVPSFLKVFANDHYGIIKMFSQSVQINLKHNKMPEMSI</sequence>
<gene>
    <name type="ORF">CG6659</name>
</gene>
<reference key="1">
    <citation type="journal article" date="2000" name="Science">
        <title>The genome sequence of Drosophila melanogaster.</title>
        <authorList>
            <person name="Adams M.D."/>
            <person name="Celniker S.E."/>
            <person name="Holt R.A."/>
            <person name="Evans C.A."/>
            <person name="Gocayne J.D."/>
            <person name="Amanatides P.G."/>
            <person name="Scherer S.E."/>
            <person name="Li P.W."/>
            <person name="Hoskins R.A."/>
            <person name="Galle R.F."/>
            <person name="George R.A."/>
            <person name="Lewis S.E."/>
            <person name="Richards S."/>
            <person name="Ashburner M."/>
            <person name="Henderson S.N."/>
            <person name="Sutton G.G."/>
            <person name="Wortman J.R."/>
            <person name="Yandell M.D."/>
            <person name="Zhang Q."/>
            <person name="Chen L.X."/>
            <person name="Brandon R.C."/>
            <person name="Rogers Y.-H.C."/>
            <person name="Blazej R.G."/>
            <person name="Champe M."/>
            <person name="Pfeiffer B.D."/>
            <person name="Wan K.H."/>
            <person name="Doyle C."/>
            <person name="Baxter E.G."/>
            <person name="Helt G."/>
            <person name="Nelson C.R."/>
            <person name="Miklos G.L.G."/>
            <person name="Abril J.F."/>
            <person name="Agbayani A."/>
            <person name="An H.-J."/>
            <person name="Andrews-Pfannkoch C."/>
            <person name="Baldwin D."/>
            <person name="Ballew R.M."/>
            <person name="Basu A."/>
            <person name="Baxendale J."/>
            <person name="Bayraktaroglu L."/>
            <person name="Beasley E.M."/>
            <person name="Beeson K.Y."/>
            <person name="Benos P.V."/>
            <person name="Berman B.P."/>
            <person name="Bhandari D."/>
            <person name="Bolshakov S."/>
            <person name="Borkova D."/>
            <person name="Botchan M.R."/>
            <person name="Bouck J."/>
            <person name="Brokstein P."/>
            <person name="Brottier P."/>
            <person name="Burtis K.C."/>
            <person name="Busam D.A."/>
            <person name="Butler H."/>
            <person name="Cadieu E."/>
            <person name="Center A."/>
            <person name="Chandra I."/>
            <person name="Cherry J.M."/>
            <person name="Cawley S."/>
            <person name="Dahlke C."/>
            <person name="Davenport L.B."/>
            <person name="Davies P."/>
            <person name="de Pablos B."/>
            <person name="Delcher A."/>
            <person name="Deng Z."/>
            <person name="Mays A.D."/>
            <person name="Dew I."/>
            <person name="Dietz S.M."/>
            <person name="Dodson K."/>
            <person name="Doup L.E."/>
            <person name="Downes M."/>
            <person name="Dugan-Rocha S."/>
            <person name="Dunkov B.C."/>
            <person name="Dunn P."/>
            <person name="Durbin K.J."/>
            <person name="Evangelista C.C."/>
            <person name="Ferraz C."/>
            <person name="Ferriera S."/>
            <person name="Fleischmann W."/>
            <person name="Fosler C."/>
            <person name="Gabrielian A.E."/>
            <person name="Garg N.S."/>
            <person name="Gelbart W.M."/>
            <person name="Glasser K."/>
            <person name="Glodek A."/>
            <person name="Gong F."/>
            <person name="Gorrell J.H."/>
            <person name="Gu Z."/>
            <person name="Guan P."/>
            <person name="Harris M."/>
            <person name="Harris N.L."/>
            <person name="Harvey D.A."/>
            <person name="Heiman T.J."/>
            <person name="Hernandez J.R."/>
            <person name="Houck J."/>
            <person name="Hostin D."/>
            <person name="Houston K.A."/>
            <person name="Howland T.J."/>
            <person name="Wei M.-H."/>
            <person name="Ibegwam C."/>
            <person name="Jalali M."/>
            <person name="Kalush F."/>
            <person name="Karpen G.H."/>
            <person name="Ke Z."/>
            <person name="Kennison J.A."/>
            <person name="Ketchum K.A."/>
            <person name="Kimmel B.E."/>
            <person name="Kodira C.D."/>
            <person name="Kraft C.L."/>
            <person name="Kravitz S."/>
            <person name="Kulp D."/>
            <person name="Lai Z."/>
            <person name="Lasko P."/>
            <person name="Lei Y."/>
            <person name="Levitsky A.A."/>
            <person name="Li J.H."/>
            <person name="Li Z."/>
            <person name="Liang Y."/>
            <person name="Lin X."/>
            <person name="Liu X."/>
            <person name="Mattei B."/>
            <person name="McIntosh T.C."/>
            <person name="McLeod M.P."/>
            <person name="McPherson D."/>
            <person name="Merkulov G."/>
            <person name="Milshina N.V."/>
            <person name="Mobarry C."/>
            <person name="Morris J."/>
            <person name="Moshrefi A."/>
            <person name="Mount S.M."/>
            <person name="Moy M."/>
            <person name="Murphy B."/>
            <person name="Murphy L."/>
            <person name="Muzny D.M."/>
            <person name="Nelson D.L."/>
            <person name="Nelson D.R."/>
            <person name="Nelson K.A."/>
            <person name="Nixon K."/>
            <person name="Nusskern D.R."/>
            <person name="Pacleb J.M."/>
            <person name="Palazzolo M."/>
            <person name="Pittman G.S."/>
            <person name="Pan S."/>
            <person name="Pollard J."/>
            <person name="Puri V."/>
            <person name="Reese M.G."/>
            <person name="Reinert K."/>
            <person name="Remington K."/>
            <person name="Saunders R.D.C."/>
            <person name="Scheeler F."/>
            <person name="Shen H."/>
            <person name="Shue B.C."/>
            <person name="Siden-Kiamos I."/>
            <person name="Simpson M."/>
            <person name="Skupski M.P."/>
            <person name="Smith T.J."/>
            <person name="Spier E."/>
            <person name="Spradling A.C."/>
            <person name="Stapleton M."/>
            <person name="Strong R."/>
            <person name="Sun E."/>
            <person name="Svirskas R."/>
            <person name="Tector C."/>
            <person name="Turner R."/>
            <person name="Venter E."/>
            <person name="Wang A.H."/>
            <person name="Wang X."/>
            <person name="Wang Z.-Y."/>
            <person name="Wassarman D.A."/>
            <person name="Weinstock G.M."/>
            <person name="Weissenbach J."/>
            <person name="Williams S.M."/>
            <person name="Woodage T."/>
            <person name="Worley K.C."/>
            <person name="Wu D."/>
            <person name="Yang S."/>
            <person name="Yao Q.A."/>
            <person name="Ye J."/>
            <person name="Yeh R.-F."/>
            <person name="Zaveri J.S."/>
            <person name="Zhan M."/>
            <person name="Zhang G."/>
            <person name="Zhao Q."/>
            <person name="Zheng L."/>
            <person name="Zheng X.H."/>
            <person name="Zhong F.N."/>
            <person name="Zhong W."/>
            <person name="Zhou X."/>
            <person name="Zhu S.C."/>
            <person name="Zhu X."/>
            <person name="Smith H.O."/>
            <person name="Gibbs R.A."/>
            <person name="Myers E.W."/>
            <person name="Rubin G.M."/>
            <person name="Venter J.C."/>
        </authorList>
    </citation>
    <scope>NUCLEOTIDE SEQUENCE [LARGE SCALE GENOMIC DNA]</scope>
    <source>
        <strain>Berkeley</strain>
    </source>
</reference>
<reference key="2">
    <citation type="journal article" date="2002" name="Genome Biol.">
        <title>Annotation of the Drosophila melanogaster euchromatic genome: a systematic review.</title>
        <authorList>
            <person name="Misra S."/>
            <person name="Crosby M.A."/>
            <person name="Mungall C.J."/>
            <person name="Matthews B.B."/>
            <person name="Campbell K.S."/>
            <person name="Hradecky P."/>
            <person name="Huang Y."/>
            <person name="Kaminker J.S."/>
            <person name="Millburn G.H."/>
            <person name="Prochnik S.E."/>
            <person name="Smith C.D."/>
            <person name="Tupy J.L."/>
            <person name="Whitfield E.J."/>
            <person name="Bayraktaroglu L."/>
            <person name="Berman B.P."/>
            <person name="Bettencourt B.R."/>
            <person name="Celniker S.E."/>
            <person name="de Grey A.D.N.J."/>
            <person name="Drysdale R.A."/>
            <person name="Harris N.L."/>
            <person name="Richter J."/>
            <person name="Russo S."/>
            <person name="Schroeder A.J."/>
            <person name="Shu S.Q."/>
            <person name="Stapleton M."/>
            <person name="Yamada C."/>
            <person name="Ashburner M."/>
            <person name="Gelbart W.M."/>
            <person name="Rubin G.M."/>
            <person name="Lewis S.E."/>
        </authorList>
    </citation>
    <scope>GENOME REANNOTATION</scope>
    <scope>ALTERNATIVE SPLICING</scope>
    <source>
        <strain>Berkeley</strain>
    </source>
</reference>
<reference key="3">
    <citation type="journal article" date="2002" name="Genome Biol.">
        <title>A Drosophila full-length cDNA resource.</title>
        <authorList>
            <person name="Stapleton M."/>
            <person name="Carlson J.W."/>
            <person name="Brokstein P."/>
            <person name="Yu C."/>
            <person name="Champe M."/>
            <person name="George R.A."/>
            <person name="Guarin H."/>
            <person name="Kronmiller B."/>
            <person name="Pacleb J.M."/>
            <person name="Park S."/>
            <person name="Wan K.H."/>
            <person name="Rubin G.M."/>
            <person name="Celniker S.E."/>
        </authorList>
    </citation>
    <scope>NUCLEOTIDE SEQUENCE [LARGE SCALE MRNA]</scope>
    <source>
        <strain>Berkeley</strain>
        <tissue>Embryo</tissue>
    </source>
</reference>
<feature type="chain" id="PRO_0000311884" description="C-mannosyltransferase dpy-19 homolog">
    <location>
        <begin position="1"/>
        <end position="872"/>
    </location>
</feature>
<feature type="transmembrane region" description="Helical" evidence="2">
    <location>
        <begin position="4"/>
        <end position="24"/>
    </location>
</feature>
<feature type="transmembrane region" description="Helical" evidence="2">
    <location>
        <begin position="126"/>
        <end position="146"/>
    </location>
</feature>
<feature type="transmembrane region" description="Helical" evidence="2">
    <location>
        <begin position="149"/>
        <end position="169"/>
    </location>
</feature>
<feature type="transmembrane region" description="Helical" evidence="2">
    <location>
        <begin position="179"/>
        <end position="199"/>
    </location>
</feature>
<feature type="transmembrane region" description="Helical" evidence="2">
    <location>
        <begin position="211"/>
        <end position="231"/>
    </location>
</feature>
<feature type="transmembrane region" description="Helical" evidence="2">
    <location>
        <begin position="257"/>
        <end position="277"/>
    </location>
</feature>
<feature type="transmembrane region" description="Helical" evidence="2">
    <location>
        <begin position="279"/>
        <end position="299"/>
    </location>
</feature>
<feature type="transmembrane region" description="Helical" evidence="2">
    <location>
        <begin position="326"/>
        <end position="346"/>
    </location>
</feature>
<feature type="transmembrane region" description="Helical" evidence="2">
    <location>
        <begin position="399"/>
        <end position="419"/>
    </location>
</feature>
<feature type="transmembrane region" description="Helical" evidence="2">
    <location>
        <begin position="627"/>
        <end position="647"/>
    </location>
</feature>
<feature type="transmembrane region" description="Helical" evidence="2">
    <location>
        <begin position="678"/>
        <end position="698"/>
    </location>
</feature>
<feature type="region of interest" description="Disordered" evidence="3">
    <location>
        <begin position="514"/>
        <end position="620"/>
    </location>
</feature>
<feature type="coiled-coil region" evidence="2">
    <location>
        <begin position="508"/>
        <end position="535"/>
    </location>
</feature>
<feature type="compositionally biased region" description="Basic and acidic residues" evidence="3">
    <location>
        <begin position="524"/>
        <end position="533"/>
    </location>
</feature>
<feature type="compositionally biased region" description="Acidic residues" evidence="3">
    <location>
        <begin position="541"/>
        <end position="551"/>
    </location>
</feature>
<feature type="splice variant" id="VSP_029633" description="In isoform 2." evidence="4">
    <location>
        <begin position="1"/>
        <end position="115"/>
    </location>
</feature>
<evidence type="ECO:0000250" key="1"/>
<evidence type="ECO:0000255" key="2"/>
<evidence type="ECO:0000256" key="3">
    <source>
        <dbReference type="SAM" id="MobiDB-lite"/>
    </source>
</evidence>
<evidence type="ECO:0000305" key="4"/>
<proteinExistence type="evidence at transcript level"/>
<dbReference type="EC" id="2.4.1.-"/>
<dbReference type="EMBL" id="AE014298">
    <property type="protein sequence ID" value="AAF48869.1"/>
    <property type="molecule type" value="Genomic_DNA"/>
</dbReference>
<dbReference type="EMBL" id="AE014298">
    <property type="protein sequence ID" value="AAF48870.1"/>
    <property type="molecule type" value="Genomic_DNA"/>
</dbReference>
<dbReference type="EMBL" id="AY122173">
    <property type="protein sequence ID" value="AAM52685.1"/>
    <property type="molecule type" value="mRNA"/>
</dbReference>
<dbReference type="RefSeq" id="NP_573317.1">
    <molecule id="Q9VWR8-1"/>
    <property type="nucleotide sequence ID" value="NM_133089.2"/>
</dbReference>
<dbReference type="RefSeq" id="NP_728189.1">
    <molecule id="Q9VWR8-2"/>
    <property type="nucleotide sequence ID" value="NM_167627.1"/>
</dbReference>
<dbReference type="SMR" id="Q9VWR8"/>
<dbReference type="BioGRID" id="59166">
    <property type="interactions" value="1"/>
</dbReference>
<dbReference type="FunCoup" id="Q9VWR8">
    <property type="interactions" value="917"/>
</dbReference>
<dbReference type="IntAct" id="Q9VWR8">
    <property type="interactions" value="1"/>
</dbReference>
<dbReference type="STRING" id="7227.FBpp0074383"/>
<dbReference type="GlyGen" id="Q9VWR8">
    <property type="glycosylation" value="1 site"/>
</dbReference>
<dbReference type="PaxDb" id="7227-FBpp0074383"/>
<dbReference type="DNASU" id="32854"/>
<dbReference type="EnsemblMetazoa" id="FBtr0074612">
    <molecule id="Q9VWR8-1"/>
    <property type="protein sequence ID" value="FBpp0074383"/>
    <property type="gene ID" value="FBgn0030946"/>
</dbReference>
<dbReference type="EnsemblMetazoa" id="FBtr0074613">
    <molecule id="Q9VWR8-2"/>
    <property type="protein sequence ID" value="FBpp0074384"/>
    <property type="gene ID" value="FBgn0030946"/>
</dbReference>
<dbReference type="GeneID" id="32854"/>
<dbReference type="KEGG" id="dme:Dmel_CG6659"/>
<dbReference type="UCSC" id="CG6659-RA">
    <molecule id="Q9VWR8-1"/>
    <property type="organism name" value="d. melanogaster"/>
</dbReference>
<dbReference type="AGR" id="FB:FBgn0030946"/>
<dbReference type="FlyBase" id="FBgn0030946">
    <property type="gene designation" value="CG6659"/>
</dbReference>
<dbReference type="VEuPathDB" id="VectorBase:FBgn0030946"/>
<dbReference type="eggNOG" id="KOG4587">
    <property type="taxonomic scope" value="Eukaryota"/>
</dbReference>
<dbReference type="GeneTree" id="ENSGT00530000063023"/>
<dbReference type="HOGENOM" id="CLU_334709_0_0_1"/>
<dbReference type="InParanoid" id="Q9VWR8"/>
<dbReference type="OMA" id="DPLQGDY"/>
<dbReference type="OrthoDB" id="6019623at2759"/>
<dbReference type="PhylomeDB" id="Q9VWR8"/>
<dbReference type="BioGRID-ORCS" id="32854">
    <property type="hits" value="0 hits in 3 CRISPR screens"/>
</dbReference>
<dbReference type="GenomeRNAi" id="32854"/>
<dbReference type="PRO" id="PR:Q9VWR8"/>
<dbReference type="Proteomes" id="UP000000803">
    <property type="component" value="Chromosome X"/>
</dbReference>
<dbReference type="Bgee" id="FBgn0030946">
    <property type="expression patterns" value="Expressed in adult enterocyte in adult thorax and 147 other cell types or tissues"/>
</dbReference>
<dbReference type="GO" id="GO:0005789">
    <property type="term" value="C:endoplasmic reticulum membrane"/>
    <property type="evidence" value="ECO:0000250"/>
    <property type="project" value="FlyBase"/>
</dbReference>
<dbReference type="GO" id="GO:0000030">
    <property type="term" value="F:mannosyltransferase activity"/>
    <property type="evidence" value="ECO:0000250"/>
    <property type="project" value="FlyBase"/>
</dbReference>
<dbReference type="GO" id="GO:0018103">
    <property type="term" value="P:protein C-linked glycosylation"/>
    <property type="evidence" value="ECO:0000250"/>
    <property type="project" value="FlyBase"/>
</dbReference>
<dbReference type="CDD" id="cd20177">
    <property type="entry name" value="Dpy19"/>
    <property type="match status" value="1"/>
</dbReference>
<dbReference type="InterPro" id="IPR018732">
    <property type="entry name" value="Dpy-19/Dpy-19-like"/>
</dbReference>
<dbReference type="InterPro" id="IPR047462">
    <property type="entry name" value="Dpy19"/>
</dbReference>
<dbReference type="PANTHER" id="PTHR31488:SF1">
    <property type="entry name" value="C-MANNOSYLTRANSFERASE DPY19L1"/>
    <property type="match status" value="1"/>
</dbReference>
<dbReference type="PANTHER" id="PTHR31488">
    <property type="entry name" value="DPY-19-LIKE 1, LIKE (H. SAPIENS)"/>
    <property type="match status" value="1"/>
</dbReference>
<dbReference type="Pfam" id="PF10034">
    <property type="entry name" value="Dpy19"/>
    <property type="match status" value="1"/>
</dbReference>
<protein>
    <recommendedName>
        <fullName>C-mannosyltransferase dpy-19 homolog</fullName>
        <ecNumber>2.4.1.-</ecNumber>
    </recommendedName>
</protein>
<keyword id="KW-0025">Alternative splicing</keyword>
<keyword id="KW-0175">Coiled coil</keyword>
<keyword id="KW-0328">Glycosyltransferase</keyword>
<keyword id="KW-0472">Membrane</keyword>
<keyword id="KW-1185">Reference proteome</keyword>
<keyword id="KW-0808">Transferase</keyword>
<keyword id="KW-0812">Transmembrane</keyword>
<keyword id="KW-1133">Transmembrane helix</keyword>
<comment type="function">
    <text evidence="1">Probable C-mannosyltransferase that mediates C-mannosylation of tryptophan residues on target proteins.</text>
</comment>
<comment type="subcellular location">
    <subcellularLocation>
        <location evidence="4">Membrane</location>
        <topology evidence="4">Multi-pass membrane protein</topology>
    </subcellularLocation>
</comment>
<comment type="alternative products">
    <event type="alternative splicing"/>
    <isoform>
        <id>Q9VWR8-1</id>
        <name>1</name>
        <sequence type="displayed"/>
    </isoform>
    <isoform>
        <id>Q9VWR8-2</id>
        <name>2</name>
        <sequence type="described" ref="VSP_029633"/>
    </isoform>
</comment>
<comment type="similarity">
    <text evidence="4">Belongs to the dpy-19 family.</text>
</comment>